<accession>Q4KKR0</accession>
<evidence type="ECO:0000255" key="1">
    <source>
        <dbReference type="HAMAP-Rule" id="MF_00182"/>
    </source>
</evidence>
<keyword id="KW-0648">Protein biosynthesis</keyword>
<keyword id="KW-0808">Transferase</keyword>
<organism>
    <name type="scientific">Pseudomonas fluorescens (strain ATCC BAA-477 / NRRL B-23932 / Pf-5)</name>
    <dbReference type="NCBI Taxonomy" id="220664"/>
    <lineage>
        <taxon>Bacteria</taxon>
        <taxon>Pseudomonadati</taxon>
        <taxon>Pseudomonadota</taxon>
        <taxon>Gammaproteobacteria</taxon>
        <taxon>Pseudomonadales</taxon>
        <taxon>Pseudomonadaceae</taxon>
        <taxon>Pseudomonas</taxon>
    </lineage>
</organism>
<feature type="chain" id="PRO_1000020131" description="Methionyl-tRNA formyltransferase">
    <location>
        <begin position="1"/>
        <end position="319"/>
    </location>
</feature>
<feature type="binding site" evidence="1">
    <location>
        <begin position="113"/>
        <end position="116"/>
    </location>
    <ligand>
        <name>(6S)-5,6,7,8-tetrahydrofolate</name>
        <dbReference type="ChEBI" id="CHEBI:57453"/>
    </ligand>
</feature>
<sequence length="319" mass="33862">MTEPLRIVFAGTPEFAAEHLKALLDSPYQIVAVYTQPDRPAGRGQKLMPSPVKQLALENDIPVLQPPTLRNAEAQAELAALKPDLMVVVAYGLILPQAVLDIPRLGCINSHASLLPRWRGAAPIQRAVQAGDAQSGVTVMRMEAGLDTGPMLLKVSTPISAEDTGGSLHDRLAEMGPPAVLQAIEGLAAGTLEGEVQDDSLATYAHKLNKDEARIDWSRPAVELERLVRAFNPWPICHSSLNGEALKVLAATLAEGKGAPGEILGASKDGLIVACGEQALCLTRLQLPGGKALNFSDLFNSRREKFAIGTVLGQTADAQ</sequence>
<protein>
    <recommendedName>
        <fullName evidence="1">Methionyl-tRNA formyltransferase</fullName>
        <ecNumber evidence="1">2.1.2.9</ecNumber>
    </recommendedName>
</protein>
<gene>
    <name evidence="1" type="primary">fmt</name>
    <name type="ordered locus">PFL_0021</name>
</gene>
<name>FMT_PSEF5</name>
<reference key="1">
    <citation type="journal article" date="2005" name="Nat. Biotechnol.">
        <title>Complete genome sequence of the plant commensal Pseudomonas fluorescens Pf-5.</title>
        <authorList>
            <person name="Paulsen I.T."/>
            <person name="Press C.M."/>
            <person name="Ravel J."/>
            <person name="Kobayashi D.Y."/>
            <person name="Myers G.S.A."/>
            <person name="Mavrodi D.V."/>
            <person name="DeBoy R.T."/>
            <person name="Seshadri R."/>
            <person name="Ren Q."/>
            <person name="Madupu R."/>
            <person name="Dodson R.J."/>
            <person name="Durkin A.S."/>
            <person name="Brinkac L.M."/>
            <person name="Daugherty S.C."/>
            <person name="Sullivan S.A."/>
            <person name="Rosovitz M.J."/>
            <person name="Gwinn M.L."/>
            <person name="Zhou L."/>
            <person name="Schneider D.J."/>
            <person name="Cartinhour S.W."/>
            <person name="Nelson W.C."/>
            <person name="Weidman J."/>
            <person name="Watkins K."/>
            <person name="Tran K."/>
            <person name="Khouri H."/>
            <person name="Pierson E.A."/>
            <person name="Pierson L.S. III"/>
            <person name="Thomashow L.S."/>
            <person name="Loper J.E."/>
        </authorList>
    </citation>
    <scope>NUCLEOTIDE SEQUENCE [LARGE SCALE GENOMIC DNA]</scope>
    <source>
        <strain>ATCC BAA-477 / NRRL B-23932 / Pf-5</strain>
    </source>
</reference>
<comment type="function">
    <text evidence="1">Attaches a formyl group to the free amino group of methionyl-tRNA(fMet). The formyl group appears to play a dual role in the initiator identity of N-formylmethionyl-tRNA by promoting its recognition by IF2 and preventing the misappropriation of this tRNA by the elongation apparatus.</text>
</comment>
<comment type="catalytic activity">
    <reaction evidence="1">
        <text>L-methionyl-tRNA(fMet) + (6R)-10-formyltetrahydrofolate = N-formyl-L-methionyl-tRNA(fMet) + (6S)-5,6,7,8-tetrahydrofolate + H(+)</text>
        <dbReference type="Rhea" id="RHEA:24380"/>
        <dbReference type="Rhea" id="RHEA-COMP:9952"/>
        <dbReference type="Rhea" id="RHEA-COMP:9953"/>
        <dbReference type="ChEBI" id="CHEBI:15378"/>
        <dbReference type="ChEBI" id="CHEBI:57453"/>
        <dbReference type="ChEBI" id="CHEBI:78530"/>
        <dbReference type="ChEBI" id="CHEBI:78844"/>
        <dbReference type="ChEBI" id="CHEBI:195366"/>
        <dbReference type="EC" id="2.1.2.9"/>
    </reaction>
</comment>
<comment type="similarity">
    <text evidence="1">Belongs to the Fmt family.</text>
</comment>
<dbReference type="EC" id="2.1.2.9" evidence="1"/>
<dbReference type="EMBL" id="CP000076">
    <property type="protein sequence ID" value="AAY95439.1"/>
    <property type="molecule type" value="Genomic_DNA"/>
</dbReference>
<dbReference type="RefSeq" id="WP_011058410.1">
    <property type="nucleotide sequence ID" value="NC_004129.6"/>
</dbReference>
<dbReference type="SMR" id="Q4KKR0"/>
<dbReference type="STRING" id="220664.PFL_0021"/>
<dbReference type="KEGG" id="pfl:PFL_0021"/>
<dbReference type="PATRIC" id="fig|220664.5.peg.21"/>
<dbReference type="eggNOG" id="COG0223">
    <property type="taxonomic scope" value="Bacteria"/>
</dbReference>
<dbReference type="HOGENOM" id="CLU_033347_1_2_6"/>
<dbReference type="Proteomes" id="UP000008540">
    <property type="component" value="Chromosome"/>
</dbReference>
<dbReference type="GO" id="GO:0005829">
    <property type="term" value="C:cytosol"/>
    <property type="evidence" value="ECO:0007669"/>
    <property type="project" value="TreeGrafter"/>
</dbReference>
<dbReference type="GO" id="GO:0004479">
    <property type="term" value="F:methionyl-tRNA formyltransferase activity"/>
    <property type="evidence" value="ECO:0007669"/>
    <property type="project" value="UniProtKB-UniRule"/>
</dbReference>
<dbReference type="CDD" id="cd08646">
    <property type="entry name" value="FMT_core_Met-tRNA-FMT_N"/>
    <property type="match status" value="1"/>
</dbReference>
<dbReference type="CDD" id="cd08704">
    <property type="entry name" value="Met_tRNA_FMT_C"/>
    <property type="match status" value="1"/>
</dbReference>
<dbReference type="FunFam" id="3.40.50.170:FF:000003">
    <property type="entry name" value="Methionyl-tRNA formyltransferase"/>
    <property type="match status" value="1"/>
</dbReference>
<dbReference type="Gene3D" id="3.10.25.10">
    <property type="entry name" value="Formyl transferase, C-terminal domain"/>
    <property type="match status" value="1"/>
</dbReference>
<dbReference type="Gene3D" id="3.40.50.170">
    <property type="entry name" value="Formyl transferase, N-terminal domain"/>
    <property type="match status" value="1"/>
</dbReference>
<dbReference type="HAMAP" id="MF_00182">
    <property type="entry name" value="Formyl_trans"/>
    <property type="match status" value="1"/>
</dbReference>
<dbReference type="InterPro" id="IPR005794">
    <property type="entry name" value="Fmt"/>
</dbReference>
<dbReference type="InterPro" id="IPR005793">
    <property type="entry name" value="Formyl_trans_C"/>
</dbReference>
<dbReference type="InterPro" id="IPR037022">
    <property type="entry name" value="Formyl_trans_C_sf"/>
</dbReference>
<dbReference type="InterPro" id="IPR002376">
    <property type="entry name" value="Formyl_transf_N"/>
</dbReference>
<dbReference type="InterPro" id="IPR036477">
    <property type="entry name" value="Formyl_transf_N_sf"/>
</dbReference>
<dbReference type="InterPro" id="IPR011034">
    <property type="entry name" value="Formyl_transferase-like_C_sf"/>
</dbReference>
<dbReference type="InterPro" id="IPR001555">
    <property type="entry name" value="GART_AS"/>
</dbReference>
<dbReference type="InterPro" id="IPR044135">
    <property type="entry name" value="Met-tRNA-FMT_C"/>
</dbReference>
<dbReference type="InterPro" id="IPR041711">
    <property type="entry name" value="Met-tRNA-FMT_N"/>
</dbReference>
<dbReference type="NCBIfam" id="TIGR00460">
    <property type="entry name" value="fmt"/>
    <property type="match status" value="1"/>
</dbReference>
<dbReference type="PANTHER" id="PTHR11138">
    <property type="entry name" value="METHIONYL-TRNA FORMYLTRANSFERASE"/>
    <property type="match status" value="1"/>
</dbReference>
<dbReference type="PANTHER" id="PTHR11138:SF5">
    <property type="entry name" value="METHIONYL-TRNA FORMYLTRANSFERASE, MITOCHONDRIAL"/>
    <property type="match status" value="1"/>
</dbReference>
<dbReference type="Pfam" id="PF02911">
    <property type="entry name" value="Formyl_trans_C"/>
    <property type="match status" value="1"/>
</dbReference>
<dbReference type="Pfam" id="PF00551">
    <property type="entry name" value="Formyl_trans_N"/>
    <property type="match status" value="1"/>
</dbReference>
<dbReference type="SUPFAM" id="SSF50486">
    <property type="entry name" value="FMT C-terminal domain-like"/>
    <property type="match status" value="1"/>
</dbReference>
<dbReference type="SUPFAM" id="SSF53328">
    <property type="entry name" value="Formyltransferase"/>
    <property type="match status" value="1"/>
</dbReference>
<dbReference type="PROSITE" id="PS00373">
    <property type="entry name" value="GART"/>
    <property type="match status" value="1"/>
</dbReference>
<proteinExistence type="inferred from homology"/>